<sequence>MNSKNRINNVGEGVDIEIPDTAHQISSDSWFQAAFVLTTSINSAYVLGYSGTVMVPLGWIGGVVGLILATAISLYANTLVAKLHEFGGKRHIRYRDLAGFIYGRKAYCLTWVLQYVNLFMINCGFIILAGSALKAVYVLFRDDHAMKLPHFIAIAGLICAVFAIGIPHLSALGIWLAVSTILSLIYIVVAIVLSVKDGVKAPSRDYEIQGSPLSKLFTITGAAATLVFVFNTGMLPEIQATVKQPVVKNMMKALYFQFTVGVLPMFAVVFIGYWAYGSSTSPYLLNNVNGPLWVKALANISAILQSVISLHIFASPTYEYMDTKFGIKGNPLALKNLLFRIMARGGYIAVSTLLSALLPFLGDFMSLTGAVSTFPLTFILANHMYYKAKNNKLNTLQKLCHWLNVVFFSLMSVAAAIAALRLIALDSKNFHVFADL</sequence>
<reference key="1">
    <citation type="journal article" date="1999" name="Nature">
        <title>Sequence and analysis of chromosome 2 of the plant Arabidopsis thaliana.</title>
        <authorList>
            <person name="Lin X."/>
            <person name="Kaul S."/>
            <person name="Rounsley S.D."/>
            <person name="Shea T.P."/>
            <person name="Benito M.-I."/>
            <person name="Town C.D."/>
            <person name="Fujii C.Y."/>
            <person name="Mason T.M."/>
            <person name="Bowman C.L."/>
            <person name="Barnstead M.E."/>
            <person name="Feldblyum T.V."/>
            <person name="Buell C.R."/>
            <person name="Ketchum K.A."/>
            <person name="Lee J.J."/>
            <person name="Ronning C.M."/>
            <person name="Koo H.L."/>
            <person name="Moffat K.S."/>
            <person name="Cronin L.A."/>
            <person name="Shen M."/>
            <person name="Pai G."/>
            <person name="Van Aken S."/>
            <person name="Umayam L."/>
            <person name="Tallon L.J."/>
            <person name="Gill J.E."/>
            <person name="Adams M.D."/>
            <person name="Carrera A.J."/>
            <person name="Creasy T.H."/>
            <person name="Goodman H.M."/>
            <person name="Somerville C.R."/>
            <person name="Copenhaver G.P."/>
            <person name="Preuss D."/>
            <person name="Nierman W.C."/>
            <person name="White O."/>
            <person name="Eisen J.A."/>
            <person name="Salzberg S.L."/>
            <person name="Fraser C.M."/>
            <person name="Venter J.C."/>
        </authorList>
    </citation>
    <scope>NUCLEOTIDE SEQUENCE [LARGE SCALE GENOMIC DNA]</scope>
    <source>
        <strain>cv. Columbia</strain>
    </source>
</reference>
<reference key="2">
    <citation type="journal article" date="2017" name="Plant J.">
        <title>Araport11: a complete reannotation of the Arabidopsis thaliana reference genome.</title>
        <authorList>
            <person name="Cheng C.Y."/>
            <person name="Krishnakumar V."/>
            <person name="Chan A.P."/>
            <person name="Thibaud-Nissen F."/>
            <person name="Schobel S."/>
            <person name="Town C.D."/>
        </authorList>
    </citation>
    <scope>GENOME REANNOTATION</scope>
    <source>
        <strain>cv. Columbia</strain>
    </source>
</reference>
<reference key="3">
    <citation type="journal article" date="2003" name="Science">
        <title>Empirical analysis of transcriptional activity in the Arabidopsis genome.</title>
        <authorList>
            <person name="Yamada K."/>
            <person name="Lim J."/>
            <person name="Dale J.M."/>
            <person name="Chen H."/>
            <person name="Shinn P."/>
            <person name="Palm C.J."/>
            <person name="Southwick A.M."/>
            <person name="Wu H.C."/>
            <person name="Kim C.J."/>
            <person name="Nguyen M."/>
            <person name="Pham P.K."/>
            <person name="Cheuk R.F."/>
            <person name="Karlin-Newmann G."/>
            <person name="Liu S.X."/>
            <person name="Lam B."/>
            <person name="Sakano H."/>
            <person name="Wu T."/>
            <person name="Yu G."/>
            <person name="Miranda M."/>
            <person name="Quach H.L."/>
            <person name="Tripp M."/>
            <person name="Chang C.H."/>
            <person name="Lee J.M."/>
            <person name="Toriumi M.J."/>
            <person name="Chan M.M."/>
            <person name="Tang C.C."/>
            <person name="Onodera C.S."/>
            <person name="Deng J.M."/>
            <person name="Akiyama K."/>
            <person name="Ansari Y."/>
            <person name="Arakawa T."/>
            <person name="Banh J."/>
            <person name="Banno F."/>
            <person name="Bowser L."/>
            <person name="Brooks S.Y."/>
            <person name="Carninci P."/>
            <person name="Chao Q."/>
            <person name="Choy N."/>
            <person name="Enju A."/>
            <person name="Goldsmith A.D."/>
            <person name="Gurjal M."/>
            <person name="Hansen N.F."/>
            <person name="Hayashizaki Y."/>
            <person name="Johnson-Hopson C."/>
            <person name="Hsuan V.W."/>
            <person name="Iida K."/>
            <person name="Karnes M."/>
            <person name="Khan S."/>
            <person name="Koesema E."/>
            <person name="Ishida J."/>
            <person name="Jiang P.X."/>
            <person name="Jones T."/>
            <person name="Kawai J."/>
            <person name="Kamiya A."/>
            <person name="Meyers C."/>
            <person name="Nakajima M."/>
            <person name="Narusaka M."/>
            <person name="Seki M."/>
            <person name="Sakurai T."/>
            <person name="Satou M."/>
            <person name="Tamse R."/>
            <person name="Vaysberg M."/>
            <person name="Wallender E.K."/>
            <person name="Wong C."/>
            <person name="Yamamura Y."/>
            <person name="Yuan S."/>
            <person name="Shinozaki K."/>
            <person name="Davis R.W."/>
            <person name="Theologis A."/>
            <person name="Ecker J.R."/>
        </authorList>
    </citation>
    <scope>NUCLEOTIDE SEQUENCE [LARGE SCALE MRNA]</scope>
    <source>
        <strain>cv. Columbia</strain>
    </source>
</reference>
<reference key="4">
    <citation type="submission" date="2002-03" db="EMBL/GenBank/DDBJ databases">
        <title>Full-length cDNA from Arabidopsis thaliana.</title>
        <authorList>
            <person name="Brover V.V."/>
            <person name="Troukhan M.E."/>
            <person name="Alexandrov N.A."/>
            <person name="Lu Y.-P."/>
            <person name="Flavell R.B."/>
            <person name="Feldmann K.A."/>
        </authorList>
    </citation>
    <scope>NUCLEOTIDE SEQUENCE [LARGE SCALE MRNA]</scope>
</reference>
<reference key="5">
    <citation type="journal article" date="2005" name="Plant Physiol.">
        <title>The AtProT family. Compatible solute transporters with similar substrate specificity but differential expression patterns.</title>
        <authorList>
            <person name="Grallath S."/>
            <person name="Weimar T."/>
            <person name="Meyer A."/>
            <person name="Gumy C."/>
            <person name="Suter-Grotemeyer M."/>
            <person name="Neuhaus J.M."/>
            <person name="Rentsch D."/>
        </authorList>
    </citation>
    <scope>FUNCTION</scope>
    <scope>BIOPHYSICOCHEMICAL PROPERTIES</scope>
    <scope>SUBCELLULAR LOCATION</scope>
    <scope>TISSUE SPECIFICITY</scope>
</reference>
<reference key="6">
    <citation type="journal article" date="2011" name="J. Exp. Bot.">
        <title>In planta function of compatible solute transporters of the AtProT family.</title>
        <authorList>
            <person name="Lehmann S."/>
            <person name="Gumy C."/>
            <person name="Blatter E."/>
            <person name="Boeffel S."/>
            <person name="Fricke W."/>
            <person name="Rentsch D."/>
        </authorList>
    </citation>
    <scope>DISRUPTION PHENOTYPE</scope>
</reference>
<dbReference type="EMBL" id="AC006919">
    <property type="protein sequence ID" value="AAD24641.1"/>
    <property type="molecule type" value="Genomic_DNA"/>
</dbReference>
<dbReference type="EMBL" id="CP002685">
    <property type="protein sequence ID" value="AEC09272.1"/>
    <property type="molecule type" value="Genomic_DNA"/>
</dbReference>
<dbReference type="EMBL" id="BT004018">
    <property type="protein sequence ID" value="AAO42054.1"/>
    <property type="molecule type" value="mRNA"/>
</dbReference>
<dbReference type="EMBL" id="AY086068">
    <property type="protein sequence ID" value="AAM63275.1"/>
    <property type="molecule type" value="mRNA"/>
</dbReference>
<dbReference type="PIR" id="D84782">
    <property type="entry name" value="D84782"/>
</dbReference>
<dbReference type="RefSeq" id="NP_181198.1">
    <property type="nucleotide sequence ID" value="NM_129215.4"/>
</dbReference>
<dbReference type="SMR" id="Q9SJP9"/>
<dbReference type="BioGRID" id="3576">
    <property type="interactions" value="1"/>
</dbReference>
<dbReference type="FunCoup" id="Q9SJP9">
    <property type="interactions" value="1"/>
</dbReference>
<dbReference type="STRING" id="3702.Q9SJP9"/>
<dbReference type="PaxDb" id="3702-AT2G36590.1"/>
<dbReference type="ProteomicsDB" id="226376"/>
<dbReference type="EnsemblPlants" id="AT2G36590.1">
    <property type="protein sequence ID" value="AT2G36590.1"/>
    <property type="gene ID" value="AT2G36590"/>
</dbReference>
<dbReference type="GeneID" id="818232"/>
<dbReference type="Gramene" id="AT2G36590.1">
    <property type="protein sequence ID" value="AT2G36590.1"/>
    <property type="gene ID" value="AT2G36590"/>
</dbReference>
<dbReference type="KEGG" id="ath:AT2G36590"/>
<dbReference type="Araport" id="AT2G36590"/>
<dbReference type="TAIR" id="AT2G36590">
    <property type="gene designation" value="PROT3"/>
</dbReference>
<dbReference type="eggNOG" id="KOG1303">
    <property type="taxonomic scope" value="Eukaryota"/>
</dbReference>
<dbReference type="HOGENOM" id="CLU_031160_3_0_1"/>
<dbReference type="InParanoid" id="Q9SJP9"/>
<dbReference type="OMA" id="HMYIIAM"/>
<dbReference type="PhylomeDB" id="Q9SJP9"/>
<dbReference type="SABIO-RK" id="Q9SJP9"/>
<dbReference type="PRO" id="PR:Q9SJP9"/>
<dbReference type="Proteomes" id="UP000006548">
    <property type="component" value="Chromosome 2"/>
</dbReference>
<dbReference type="ExpressionAtlas" id="Q9SJP9">
    <property type="expression patterns" value="baseline and differential"/>
</dbReference>
<dbReference type="GO" id="GO:0005886">
    <property type="term" value="C:plasma membrane"/>
    <property type="evidence" value="ECO:0000314"/>
    <property type="project" value="TAIR"/>
</dbReference>
<dbReference type="GO" id="GO:0015193">
    <property type="term" value="F:L-proline transmembrane transporter activity"/>
    <property type="evidence" value="ECO:0000316"/>
    <property type="project" value="TAIR"/>
</dbReference>
<dbReference type="GO" id="GO:0015824">
    <property type="term" value="P:proline transport"/>
    <property type="evidence" value="ECO:0000316"/>
    <property type="project" value="TAIR"/>
</dbReference>
<dbReference type="InterPro" id="IPR013057">
    <property type="entry name" value="AA_transpt_TM"/>
</dbReference>
<dbReference type="PANTHER" id="PTHR48017">
    <property type="entry name" value="OS05G0424000 PROTEIN-RELATED"/>
    <property type="match status" value="1"/>
</dbReference>
<dbReference type="Pfam" id="PF01490">
    <property type="entry name" value="Aa_trans"/>
    <property type="match status" value="1"/>
</dbReference>
<evidence type="ECO:0000255" key="1"/>
<evidence type="ECO:0000269" key="2">
    <source>
    </source>
</evidence>
<evidence type="ECO:0000269" key="3">
    <source>
    </source>
</evidence>
<evidence type="ECO:0000305" key="4"/>
<evidence type="ECO:0000305" key="5">
    <source>
    </source>
</evidence>
<keyword id="KW-0029">Amino-acid transport</keyword>
<keyword id="KW-1003">Cell membrane</keyword>
<keyword id="KW-0472">Membrane</keyword>
<keyword id="KW-1185">Reference proteome</keyword>
<keyword id="KW-0812">Transmembrane</keyword>
<keyword id="KW-1133">Transmembrane helix</keyword>
<keyword id="KW-0813">Transport</keyword>
<comment type="function">
    <text evidence="2">Proline transporter that mediates proline and glycine betaine transport. When expressed in a heterologous system (yeast), imports L-proline, glycine betaine and GABA across the plasma membrane.</text>
</comment>
<comment type="biophysicochemical properties">
    <kinetics>
        <KM evidence="2">0.29 mM for glycine betaine</KM>
        <KM evidence="2">0.999 mM for L-proline</KM>
        <KM evidence="2">5.12 mM for GABA</KM>
    </kinetics>
</comment>
<comment type="subcellular location">
    <subcellularLocation>
        <location evidence="5">Cell membrane</location>
        <topology evidence="5">Multi-pass membrane protein</topology>
    </subcellularLocation>
    <text>Plasma membrane.</text>
</comment>
<comment type="tissue specificity">
    <text evidence="2">Expressed in epidermal cells of leaves, sepals and petals.</text>
</comment>
<comment type="disruption phenotype">
    <text evidence="3">No visible phenotype under normal growth conditions.</text>
</comment>
<comment type="similarity">
    <text evidence="4">Belongs to the amino acid/polyamine transporter 2 family. Amino acid/auxin permease (AAAP) (TC 2.A.18.3) subfamily.</text>
</comment>
<feature type="chain" id="PRO_0000418995" description="Proline transporter 3">
    <location>
        <begin position="1"/>
        <end position="436"/>
    </location>
</feature>
<feature type="transmembrane region" description="Helical" evidence="1">
    <location>
        <begin position="29"/>
        <end position="49"/>
    </location>
</feature>
<feature type="transmembrane region" description="Helical" evidence="1">
    <location>
        <begin position="52"/>
        <end position="72"/>
    </location>
</feature>
<feature type="transmembrane region" description="Helical" evidence="1">
    <location>
        <begin position="118"/>
        <end position="138"/>
    </location>
</feature>
<feature type="transmembrane region" description="Helical" evidence="1">
    <location>
        <begin position="151"/>
        <end position="171"/>
    </location>
</feature>
<feature type="transmembrane region" description="Helical" evidence="1">
    <location>
        <begin position="172"/>
        <end position="192"/>
    </location>
</feature>
<feature type="transmembrane region" description="Helical" evidence="1">
    <location>
        <begin position="216"/>
        <end position="236"/>
    </location>
</feature>
<feature type="transmembrane region" description="Helical" evidence="1">
    <location>
        <begin position="254"/>
        <end position="274"/>
    </location>
</feature>
<feature type="transmembrane region" description="Helical" evidence="1">
    <location>
        <begin position="296"/>
        <end position="316"/>
    </location>
</feature>
<feature type="transmembrane region" description="Helical" evidence="1">
    <location>
        <begin position="345"/>
        <end position="365"/>
    </location>
</feature>
<feature type="transmembrane region" description="Helical" evidence="1">
    <location>
        <begin position="366"/>
        <end position="386"/>
    </location>
</feature>
<feature type="transmembrane region" description="Helical" evidence="1">
    <location>
        <begin position="405"/>
        <end position="425"/>
    </location>
</feature>
<feature type="sequence conflict" description="In Ref. 4; AAM63275." evidence="4" ref="4">
    <original>G</original>
    <variation>D</variation>
    <location>
        <position position="13"/>
    </location>
</feature>
<feature type="sequence conflict" description="In Ref. 4; AAM63275." evidence="4" ref="4">
    <original>L</original>
    <variation>F</variation>
    <location>
        <position position="118"/>
    </location>
</feature>
<feature type="sequence conflict" description="In Ref. 4; AAM63275." evidence="4" ref="4">
    <original>N</original>
    <variation>S</variation>
    <location>
        <position position="394"/>
    </location>
</feature>
<feature type="sequence conflict" description="In Ref. 4; AAM63275." evidence="4" ref="4">
    <original>C</original>
    <variation>W</variation>
    <location>
        <position position="400"/>
    </location>
</feature>
<feature type="sequence conflict" description="In Ref. 4; AAM63275." evidence="4" ref="4">
    <original>L</original>
    <variation>I</variation>
    <location>
        <position position="425"/>
    </location>
</feature>
<gene>
    <name type="primary">PROT3</name>
    <name type="ordered locus">At2g36590</name>
    <name type="ORF">F1O11.22</name>
</gene>
<proteinExistence type="evidence at protein level"/>
<organism>
    <name type="scientific">Arabidopsis thaliana</name>
    <name type="common">Mouse-ear cress</name>
    <dbReference type="NCBI Taxonomy" id="3702"/>
    <lineage>
        <taxon>Eukaryota</taxon>
        <taxon>Viridiplantae</taxon>
        <taxon>Streptophyta</taxon>
        <taxon>Embryophyta</taxon>
        <taxon>Tracheophyta</taxon>
        <taxon>Spermatophyta</taxon>
        <taxon>Magnoliopsida</taxon>
        <taxon>eudicotyledons</taxon>
        <taxon>Gunneridae</taxon>
        <taxon>Pentapetalae</taxon>
        <taxon>rosids</taxon>
        <taxon>malvids</taxon>
        <taxon>Brassicales</taxon>
        <taxon>Brassicaceae</taxon>
        <taxon>Camelineae</taxon>
        <taxon>Arabidopsis</taxon>
    </lineage>
</organism>
<protein>
    <recommendedName>
        <fullName>Proline transporter 3</fullName>
        <shortName>AtPROT3</shortName>
    </recommendedName>
</protein>
<accession>Q9SJP9</accession>
<accession>Q8LDD5</accession>
<name>PROT3_ARATH</name>